<proteinExistence type="inferred from homology"/>
<keyword id="KW-0030">Aminoacyl-tRNA synthetase</keyword>
<keyword id="KW-0067">ATP-binding</keyword>
<keyword id="KW-0963">Cytoplasm</keyword>
<keyword id="KW-0436">Ligase</keyword>
<keyword id="KW-0547">Nucleotide-binding</keyword>
<keyword id="KW-0648">Protein biosynthesis</keyword>
<keyword id="KW-1185">Reference proteome</keyword>
<protein>
    <recommendedName>
        <fullName evidence="1">Aspartate--tRNA ligase</fullName>
        <ecNumber evidence="1">6.1.1.12</ecNumber>
    </recommendedName>
    <alternativeName>
        <fullName evidence="1">Aspartyl-tRNA synthetase</fullName>
        <shortName evidence="1">AspRS</shortName>
    </alternativeName>
</protein>
<name>SYD_BUCAI</name>
<sequence length="586" mass="68121">MRTKYCGNIRISHVNKKVKLCGWVHKVRNLGQFIFVDMRDYTGLVQVIFELKNYKIFKKALNLRNEFCIQVFGTVQKREKKNQNIKIRTGEIEILANVLNILNTSKSLPLNFTQENNDDSRLKYRYLDLRSFDILENLKIRNKITYLIRNFMTKKNFLDIETPILTKSTPEGARDYLVPSRNHYGKFYALPQSPQLFKQILMISGIDRYYQIVKCFRDEDLRSDRQPEFTQIDIEVSFMSAKKIRNLVENLIKKLWLEIRNINLKKFPQISFHEAMKKYGSDKPDLRNPIEIIDVSNIFKDKKFISFFNLNPQKNNRIALLCISKGAHLSRKKIDDYTKYVQRFDAKKLFYMKIKECKLGCLGIHSSIKNILDEIILKEIIEKSQSKNGDILFLIADQEHIVNKSLGMLRLKIGIDLNITKKNRWEPLWIVNFPMFDKDIQGNLSSVHHPFTAVKNMDREILKNSPDLAISDSYDLIINGYEIGGGSVRIHDVNMQKQVFDIIGIKKSMQNEKFGFLIEALKYGAPPHAGIALGLDRIVMLLTNSKNIRDVIAFPKTTSATCLMTNSPSTVDNLLLQELAIKHLKK</sequence>
<comment type="function">
    <text evidence="1">Catalyzes the attachment of L-aspartate to tRNA(Asp) in a two-step reaction: L-aspartate is first activated by ATP to form Asp-AMP and then transferred to the acceptor end of tRNA(Asp).</text>
</comment>
<comment type="catalytic activity">
    <reaction evidence="1">
        <text>tRNA(Asp) + L-aspartate + ATP = L-aspartyl-tRNA(Asp) + AMP + diphosphate</text>
        <dbReference type="Rhea" id="RHEA:19649"/>
        <dbReference type="Rhea" id="RHEA-COMP:9660"/>
        <dbReference type="Rhea" id="RHEA-COMP:9678"/>
        <dbReference type="ChEBI" id="CHEBI:29991"/>
        <dbReference type="ChEBI" id="CHEBI:30616"/>
        <dbReference type="ChEBI" id="CHEBI:33019"/>
        <dbReference type="ChEBI" id="CHEBI:78442"/>
        <dbReference type="ChEBI" id="CHEBI:78516"/>
        <dbReference type="ChEBI" id="CHEBI:456215"/>
        <dbReference type="EC" id="6.1.1.12"/>
    </reaction>
</comment>
<comment type="subunit">
    <text evidence="1">Homodimer.</text>
</comment>
<comment type="subcellular location">
    <subcellularLocation>
        <location evidence="1">Cytoplasm</location>
    </subcellularLocation>
</comment>
<comment type="similarity">
    <text evidence="1">Belongs to the class-II aminoacyl-tRNA synthetase family. Type 1 subfamily.</text>
</comment>
<evidence type="ECO:0000255" key="1">
    <source>
        <dbReference type="HAMAP-Rule" id="MF_00044"/>
    </source>
</evidence>
<feature type="chain" id="PRO_0000110843" description="Aspartate--tRNA ligase">
    <location>
        <begin position="1"/>
        <end position="586"/>
    </location>
</feature>
<feature type="region of interest" description="Aspartate" evidence="1">
    <location>
        <begin position="195"/>
        <end position="198"/>
    </location>
</feature>
<feature type="binding site" evidence="1">
    <location>
        <position position="171"/>
    </location>
    <ligand>
        <name>L-aspartate</name>
        <dbReference type="ChEBI" id="CHEBI:29991"/>
    </ligand>
</feature>
<feature type="binding site" evidence="1">
    <location>
        <begin position="217"/>
        <end position="219"/>
    </location>
    <ligand>
        <name>ATP</name>
        <dbReference type="ChEBI" id="CHEBI:30616"/>
    </ligand>
</feature>
<feature type="binding site" evidence="1">
    <location>
        <position position="217"/>
    </location>
    <ligand>
        <name>L-aspartate</name>
        <dbReference type="ChEBI" id="CHEBI:29991"/>
    </ligand>
</feature>
<feature type="binding site" evidence="1">
    <location>
        <position position="226"/>
    </location>
    <ligand>
        <name>ATP</name>
        <dbReference type="ChEBI" id="CHEBI:30616"/>
    </ligand>
</feature>
<feature type="binding site" evidence="1">
    <location>
        <position position="448"/>
    </location>
    <ligand>
        <name>L-aspartate</name>
        <dbReference type="ChEBI" id="CHEBI:29991"/>
    </ligand>
</feature>
<feature type="binding site" evidence="1">
    <location>
        <position position="482"/>
    </location>
    <ligand>
        <name>ATP</name>
        <dbReference type="ChEBI" id="CHEBI:30616"/>
    </ligand>
</feature>
<feature type="binding site" evidence="1">
    <location>
        <position position="489"/>
    </location>
    <ligand>
        <name>L-aspartate</name>
        <dbReference type="ChEBI" id="CHEBI:29991"/>
    </ligand>
</feature>
<feature type="binding site" evidence="1">
    <location>
        <begin position="534"/>
        <end position="537"/>
    </location>
    <ligand>
        <name>ATP</name>
        <dbReference type="ChEBI" id="CHEBI:30616"/>
    </ligand>
</feature>
<organism>
    <name type="scientific">Buchnera aphidicola subsp. Acyrthosiphon pisum (strain APS)</name>
    <name type="common">Acyrthosiphon pisum symbiotic bacterium</name>
    <dbReference type="NCBI Taxonomy" id="107806"/>
    <lineage>
        <taxon>Bacteria</taxon>
        <taxon>Pseudomonadati</taxon>
        <taxon>Pseudomonadota</taxon>
        <taxon>Gammaproteobacteria</taxon>
        <taxon>Enterobacterales</taxon>
        <taxon>Erwiniaceae</taxon>
        <taxon>Buchnera</taxon>
    </lineage>
</organism>
<reference key="1">
    <citation type="journal article" date="2000" name="Nature">
        <title>Genome sequence of the endocellular bacterial symbiont of aphids Buchnera sp. APS.</title>
        <authorList>
            <person name="Shigenobu S."/>
            <person name="Watanabe H."/>
            <person name="Hattori M."/>
            <person name="Sakaki Y."/>
            <person name="Ishikawa H."/>
        </authorList>
    </citation>
    <scope>NUCLEOTIDE SEQUENCE [LARGE SCALE GENOMIC DNA]</scope>
    <source>
        <strain>APS</strain>
    </source>
</reference>
<accession>P57401</accession>
<gene>
    <name evidence="1" type="primary">aspS</name>
    <name type="ordered locus">BU316</name>
</gene>
<dbReference type="EC" id="6.1.1.12" evidence="1"/>
<dbReference type="EMBL" id="BA000003">
    <property type="protein sequence ID" value="BAB13024.1"/>
    <property type="molecule type" value="Genomic_DNA"/>
</dbReference>
<dbReference type="RefSeq" id="NP_240138.1">
    <property type="nucleotide sequence ID" value="NC_002528.1"/>
</dbReference>
<dbReference type="RefSeq" id="WP_010896062.1">
    <property type="nucleotide sequence ID" value="NC_002528.1"/>
</dbReference>
<dbReference type="SMR" id="P57401"/>
<dbReference type="STRING" id="563178.BUAP5A_309"/>
<dbReference type="EnsemblBacteria" id="BAB13024">
    <property type="protein sequence ID" value="BAB13024"/>
    <property type="gene ID" value="BAB13024"/>
</dbReference>
<dbReference type="KEGG" id="buc:BU316"/>
<dbReference type="PATRIC" id="fig|107806.10.peg.328"/>
<dbReference type="eggNOG" id="COG0173">
    <property type="taxonomic scope" value="Bacteria"/>
</dbReference>
<dbReference type="HOGENOM" id="CLU_014330_3_2_6"/>
<dbReference type="Proteomes" id="UP000001806">
    <property type="component" value="Chromosome"/>
</dbReference>
<dbReference type="GO" id="GO:0005737">
    <property type="term" value="C:cytoplasm"/>
    <property type="evidence" value="ECO:0007669"/>
    <property type="project" value="UniProtKB-SubCell"/>
</dbReference>
<dbReference type="GO" id="GO:0004815">
    <property type="term" value="F:aspartate-tRNA ligase activity"/>
    <property type="evidence" value="ECO:0007669"/>
    <property type="project" value="UniProtKB-UniRule"/>
</dbReference>
<dbReference type="GO" id="GO:0005524">
    <property type="term" value="F:ATP binding"/>
    <property type="evidence" value="ECO:0007669"/>
    <property type="project" value="UniProtKB-UniRule"/>
</dbReference>
<dbReference type="GO" id="GO:0003676">
    <property type="term" value="F:nucleic acid binding"/>
    <property type="evidence" value="ECO:0007669"/>
    <property type="project" value="InterPro"/>
</dbReference>
<dbReference type="GO" id="GO:0006422">
    <property type="term" value="P:aspartyl-tRNA aminoacylation"/>
    <property type="evidence" value="ECO:0007669"/>
    <property type="project" value="UniProtKB-UniRule"/>
</dbReference>
<dbReference type="CDD" id="cd00777">
    <property type="entry name" value="AspRS_core"/>
    <property type="match status" value="1"/>
</dbReference>
<dbReference type="CDD" id="cd04317">
    <property type="entry name" value="EcAspRS_like_N"/>
    <property type="match status" value="1"/>
</dbReference>
<dbReference type="Gene3D" id="3.30.930.10">
    <property type="entry name" value="Bira Bifunctional Protein, Domain 2"/>
    <property type="match status" value="1"/>
</dbReference>
<dbReference type="Gene3D" id="3.30.1360.30">
    <property type="entry name" value="GAD-like domain"/>
    <property type="match status" value="1"/>
</dbReference>
<dbReference type="Gene3D" id="2.40.50.140">
    <property type="entry name" value="Nucleic acid-binding proteins"/>
    <property type="match status" value="1"/>
</dbReference>
<dbReference type="HAMAP" id="MF_00044">
    <property type="entry name" value="Asp_tRNA_synth_type1"/>
    <property type="match status" value="1"/>
</dbReference>
<dbReference type="InterPro" id="IPR004364">
    <property type="entry name" value="Aa-tRNA-synt_II"/>
</dbReference>
<dbReference type="InterPro" id="IPR006195">
    <property type="entry name" value="aa-tRNA-synth_II"/>
</dbReference>
<dbReference type="InterPro" id="IPR045864">
    <property type="entry name" value="aa-tRNA-synth_II/BPL/LPL"/>
</dbReference>
<dbReference type="InterPro" id="IPR004524">
    <property type="entry name" value="Asp-tRNA-ligase_1"/>
</dbReference>
<dbReference type="InterPro" id="IPR047089">
    <property type="entry name" value="Asp-tRNA-ligase_1_N"/>
</dbReference>
<dbReference type="InterPro" id="IPR002312">
    <property type="entry name" value="Asp/Asn-tRNA-synth_IIb"/>
</dbReference>
<dbReference type="InterPro" id="IPR047090">
    <property type="entry name" value="AspRS_core"/>
</dbReference>
<dbReference type="InterPro" id="IPR004115">
    <property type="entry name" value="GAD-like_sf"/>
</dbReference>
<dbReference type="InterPro" id="IPR029351">
    <property type="entry name" value="GAD_dom"/>
</dbReference>
<dbReference type="InterPro" id="IPR012340">
    <property type="entry name" value="NA-bd_OB-fold"/>
</dbReference>
<dbReference type="InterPro" id="IPR004365">
    <property type="entry name" value="NA-bd_OB_tRNA"/>
</dbReference>
<dbReference type="NCBIfam" id="TIGR00459">
    <property type="entry name" value="aspS_bact"/>
    <property type="match status" value="1"/>
</dbReference>
<dbReference type="NCBIfam" id="NF001750">
    <property type="entry name" value="PRK00476.1"/>
    <property type="match status" value="1"/>
</dbReference>
<dbReference type="PANTHER" id="PTHR22594:SF5">
    <property type="entry name" value="ASPARTATE--TRNA LIGASE, MITOCHONDRIAL"/>
    <property type="match status" value="1"/>
</dbReference>
<dbReference type="PANTHER" id="PTHR22594">
    <property type="entry name" value="ASPARTYL/LYSYL-TRNA SYNTHETASE"/>
    <property type="match status" value="1"/>
</dbReference>
<dbReference type="Pfam" id="PF02938">
    <property type="entry name" value="GAD"/>
    <property type="match status" value="1"/>
</dbReference>
<dbReference type="Pfam" id="PF00152">
    <property type="entry name" value="tRNA-synt_2"/>
    <property type="match status" value="1"/>
</dbReference>
<dbReference type="Pfam" id="PF01336">
    <property type="entry name" value="tRNA_anti-codon"/>
    <property type="match status" value="1"/>
</dbReference>
<dbReference type="PRINTS" id="PR01042">
    <property type="entry name" value="TRNASYNTHASP"/>
</dbReference>
<dbReference type="SUPFAM" id="SSF55681">
    <property type="entry name" value="Class II aaRS and biotin synthetases"/>
    <property type="match status" value="1"/>
</dbReference>
<dbReference type="SUPFAM" id="SSF55261">
    <property type="entry name" value="GAD domain-like"/>
    <property type="match status" value="1"/>
</dbReference>
<dbReference type="SUPFAM" id="SSF50249">
    <property type="entry name" value="Nucleic acid-binding proteins"/>
    <property type="match status" value="1"/>
</dbReference>
<dbReference type="PROSITE" id="PS50862">
    <property type="entry name" value="AA_TRNA_LIGASE_II"/>
    <property type="match status" value="1"/>
</dbReference>